<keyword id="KW-1185">Reference proteome</keyword>
<keyword id="KW-0687">Ribonucleoprotein</keyword>
<keyword id="KW-0689">Ribosomal protein</keyword>
<keyword id="KW-0694">RNA-binding</keyword>
<keyword id="KW-0699">rRNA-binding</keyword>
<dbReference type="EMBL" id="CP000612">
    <property type="protein sequence ID" value="ABO48765.1"/>
    <property type="molecule type" value="Genomic_DNA"/>
</dbReference>
<dbReference type="RefSeq" id="WP_011876605.1">
    <property type="nucleotide sequence ID" value="NC_009253.1"/>
</dbReference>
<dbReference type="SMR" id="A4J112"/>
<dbReference type="STRING" id="349161.Dred_0216"/>
<dbReference type="KEGG" id="drm:Dred_0216"/>
<dbReference type="eggNOG" id="COG0088">
    <property type="taxonomic scope" value="Bacteria"/>
</dbReference>
<dbReference type="HOGENOM" id="CLU_041575_5_2_9"/>
<dbReference type="OrthoDB" id="9803201at2"/>
<dbReference type="Proteomes" id="UP000001556">
    <property type="component" value="Chromosome"/>
</dbReference>
<dbReference type="GO" id="GO:1990904">
    <property type="term" value="C:ribonucleoprotein complex"/>
    <property type="evidence" value="ECO:0007669"/>
    <property type="project" value="UniProtKB-KW"/>
</dbReference>
<dbReference type="GO" id="GO:0005840">
    <property type="term" value="C:ribosome"/>
    <property type="evidence" value="ECO:0007669"/>
    <property type="project" value="UniProtKB-KW"/>
</dbReference>
<dbReference type="GO" id="GO:0019843">
    <property type="term" value="F:rRNA binding"/>
    <property type="evidence" value="ECO:0007669"/>
    <property type="project" value="UniProtKB-UniRule"/>
</dbReference>
<dbReference type="GO" id="GO:0003735">
    <property type="term" value="F:structural constituent of ribosome"/>
    <property type="evidence" value="ECO:0007669"/>
    <property type="project" value="InterPro"/>
</dbReference>
<dbReference type="GO" id="GO:0006412">
    <property type="term" value="P:translation"/>
    <property type="evidence" value="ECO:0007669"/>
    <property type="project" value="UniProtKB-UniRule"/>
</dbReference>
<dbReference type="Gene3D" id="3.40.1370.10">
    <property type="match status" value="1"/>
</dbReference>
<dbReference type="HAMAP" id="MF_01328_B">
    <property type="entry name" value="Ribosomal_uL4_B"/>
    <property type="match status" value="1"/>
</dbReference>
<dbReference type="InterPro" id="IPR002136">
    <property type="entry name" value="Ribosomal_uL4"/>
</dbReference>
<dbReference type="InterPro" id="IPR013005">
    <property type="entry name" value="Ribosomal_uL4-like"/>
</dbReference>
<dbReference type="InterPro" id="IPR023574">
    <property type="entry name" value="Ribosomal_uL4_dom_sf"/>
</dbReference>
<dbReference type="NCBIfam" id="TIGR03953">
    <property type="entry name" value="rplD_bact"/>
    <property type="match status" value="1"/>
</dbReference>
<dbReference type="PANTHER" id="PTHR10746">
    <property type="entry name" value="50S RIBOSOMAL PROTEIN L4"/>
    <property type="match status" value="1"/>
</dbReference>
<dbReference type="PANTHER" id="PTHR10746:SF6">
    <property type="entry name" value="LARGE RIBOSOMAL SUBUNIT PROTEIN UL4M"/>
    <property type="match status" value="1"/>
</dbReference>
<dbReference type="Pfam" id="PF00573">
    <property type="entry name" value="Ribosomal_L4"/>
    <property type="match status" value="1"/>
</dbReference>
<dbReference type="SUPFAM" id="SSF52166">
    <property type="entry name" value="Ribosomal protein L4"/>
    <property type="match status" value="1"/>
</dbReference>
<organism>
    <name type="scientific">Desulforamulus reducens (strain ATCC BAA-1160 / DSM 100696 / MI-1)</name>
    <name type="common">Desulfotomaculum reducens</name>
    <dbReference type="NCBI Taxonomy" id="349161"/>
    <lineage>
        <taxon>Bacteria</taxon>
        <taxon>Bacillati</taxon>
        <taxon>Bacillota</taxon>
        <taxon>Clostridia</taxon>
        <taxon>Eubacteriales</taxon>
        <taxon>Peptococcaceae</taxon>
        <taxon>Desulforamulus</taxon>
    </lineage>
</organism>
<proteinExistence type="inferred from homology"/>
<gene>
    <name evidence="1" type="primary">rplD</name>
    <name type="ordered locus">Dred_0216</name>
</gene>
<sequence length="206" mass="22777">MPKVALYNINGEQVGEVELKDEVFGIEPHEHVMHEAVNMQLANQRQGTHDTKTRAEVRGGGRKPWRQKGTGRARAGSSRSPIWRKGGIVFGPHPRDYAISLPKKVRRLALKSALSSKVLDQNIIVLDSLTMDAPKTKDMVRILGNLKADKALVVTATRDLNVEKSARNIEGVKPLKADGVNVYDLLKYTKLVITKDAVAKIEEVLA</sequence>
<protein>
    <recommendedName>
        <fullName evidence="1">Large ribosomal subunit protein uL4</fullName>
    </recommendedName>
    <alternativeName>
        <fullName evidence="3">50S ribosomal protein L4</fullName>
    </alternativeName>
</protein>
<evidence type="ECO:0000255" key="1">
    <source>
        <dbReference type="HAMAP-Rule" id="MF_01328"/>
    </source>
</evidence>
<evidence type="ECO:0000256" key="2">
    <source>
        <dbReference type="SAM" id="MobiDB-lite"/>
    </source>
</evidence>
<evidence type="ECO:0000305" key="3"/>
<feature type="chain" id="PRO_1000073268" description="Large ribosomal subunit protein uL4">
    <location>
        <begin position="1"/>
        <end position="206"/>
    </location>
</feature>
<feature type="region of interest" description="Disordered" evidence="2">
    <location>
        <begin position="43"/>
        <end position="78"/>
    </location>
</feature>
<feature type="compositionally biased region" description="Basic and acidic residues" evidence="2">
    <location>
        <begin position="47"/>
        <end position="59"/>
    </location>
</feature>
<feature type="compositionally biased region" description="Basic residues" evidence="2">
    <location>
        <begin position="60"/>
        <end position="71"/>
    </location>
</feature>
<accession>A4J112</accession>
<reference key="1">
    <citation type="submission" date="2007-03" db="EMBL/GenBank/DDBJ databases">
        <title>Complete sequence of Desulfotomaculum reducens MI-1.</title>
        <authorList>
            <consortium name="US DOE Joint Genome Institute"/>
            <person name="Copeland A."/>
            <person name="Lucas S."/>
            <person name="Lapidus A."/>
            <person name="Barry K."/>
            <person name="Detter J.C."/>
            <person name="Glavina del Rio T."/>
            <person name="Hammon N."/>
            <person name="Israni S."/>
            <person name="Dalin E."/>
            <person name="Tice H."/>
            <person name="Pitluck S."/>
            <person name="Sims D."/>
            <person name="Brettin T."/>
            <person name="Bruce D."/>
            <person name="Han C."/>
            <person name="Tapia R."/>
            <person name="Schmutz J."/>
            <person name="Larimer F."/>
            <person name="Land M."/>
            <person name="Hauser L."/>
            <person name="Kyrpides N."/>
            <person name="Kim E."/>
            <person name="Tebo B.M."/>
            <person name="Richardson P."/>
        </authorList>
    </citation>
    <scope>NUCLEOTIDE SEQUENCE [LARGE SCALE GENOMIC DNA]</scope>
    <source>
        <strain>ATCC BAA-1160 / DSM 100696 / MI-1</strain>
    </source>
</reference>
<name>RL4_DESRM</name>
<comment type="function">
    <text evidence="1">One of the primary rRNA binding proteins, this protein initially binds near the 5'-end of the 23S rRNA. It is important during the early stages of 50S assembly. It makes multiple contacts with different domains of the 23S rRNA in the assembled 50S subunit and ribosome.</text>
</comment>
<comment type="function">
    <text evidence="1">Forms part of the polypeptide exit tunnel.</text>
</comment>
<comment type="subunit">
    <text evidence="1">Part of the 50S ribosomal subunit.</text>
</comment>
<comment type="similarity">
    <text evidence="1">Belongs to the universal ribosomal protein uL4 family.</text>
</comment>